<dbReference type="EC" id="7.4.2.8" evidence="1"/>
<dbReference type="EMBL" id="CP000769">
    <property type="protein sequence ID" value="ABS24992.1"/>
    <property type="molecule type" value="Genomic_DNA"/>
</dbReference>
<dbReference type="RefSeq" id="WP_011985098.1">
    <property type="nucleotide sequence ID" value="NC_009675.1"/>
</dbReference>
<dbReference type="SMR" id="A7H8E6"/>
<dbReference type="STRING" id="404589.Anae109_0780"/>
<dbReference type="KEGG" id="afw:Anae109_0780"/>
<dbReference type="eggNOG" id="COG0653">
    <property type="taxonomic scope" value="Bacteria"/>
</dbReference>
<dbReference type="HOGENOM" id="CLU_005314_3_0_7"/>
<dbReference type="OrthoDB" id="9805579at2"/>
<dbReference type="Proteomes" id="UP000006382">
    <property type="component" value="Chromosome"/>
</dbReference>
<dbReference type="GO" id="GO:0031522">
    <property type="term" value="C:cell envelope Sec protein transport complex"/>
    <property type="evidence" value="ECO:0007669"/>
    <property type="project" value="TreeGrafter"/>
</dbReference>
<dbReference type="GO" id="GO:0005829">
    <property type="term" value="C:cytosol"/>
    <property type="evidence" value="ECO:0007669"/>
    <property type="project" value="TreeGrafter"/>
</dbReference>
<dbReference type="GO" id="GO:0005886">
    <property type="term" value="C:plasma membrane"/>
    <property type="evidence" value="ECO:0007669"/>
    <property type="project" value="UniProtKB-SubCell"/>
</dbReference>
<dbReference type="GO" id="GO:0005524">
    <property type="term" value="F:ATP binding"/>
    <property type="evidence" value="ECO:0007669"/>
    <property type="project" value="UniProtKB-UniRule"/>
</dbReference>
<dbReference type="GO" id="GO:0046872">
    <property type="term" value="F:metal ion binding"/>
    <property type="evidence" value="ECO:0007669"/>
    <property type="project" value="UniProtKB-KW"/>
</dbReference>
<dbReference type="GO" id="GO:0008564">
    <property type="term" value="F:protein-exporting ATPase activity"/>
    <property type="evidence" value="ECO:0007669"/>
    <property type="project" value="UniProtKB-EC"/>
</dbReference>
<dbReference type="GO" id="GO:0065002">
    <property type="term" value="P:intracellular protein transmembrane transport"/>
    <property type="evidence" value="ECO:0007669"/>
    <property type="project" value="UniProtKB-UniRule"/>
</dbReference>
<dbReference type="GO" id="GO:0017038">
    <property type="term" value="P:protein import"/>
    <property type="evidence" value="ECO:0007669"/>
    <property type="project" value="InterPro"/>
</dbReference>
<dbReference type="GO" id="GO:0006605">
    <property type="term" value="P:protein targeting"/>
    <property type="evidence" value="ECO:0007669"/>
    <property type="project" value="UniProtKB-UniRule"/>
</dbReference>
<dbReference type="GO" id="GO:0043952">
    <property type="term" value="P:protein transport by the Sec complex"/>
    <property type="evidence" value="ECO:0007669"/>
    <property type="project" value="TreeGrafter"/>
</dbReference>
<dbReference type="CDD" id="cd17928">
    <property type="entry name" value="DEXDc_SecA"/>
    <property type="match status" value="1"/>
</dbReference>
<dbReference type="CDD" id="cd18803">
    <property type="entry name" value="SF2_C_secA"/>
    <property type="match status" value="1"/>
</dbReference>
<dbReference type="FunFam" id="3.40.50.300:FF:000113">
    <property type="entry name" value="Preprotein translocase subunit SecA"/>
    <property type="match status" value="1"/>
</dbReference>
<dbReference type="FunFam" id="3.90.1440.10:FF:000001">
    <property type="entry name" value="Preprotein translocase subunit SecA"/>
    <property type="match status" value="1"/>
</dbReference>
<dbReference type="Gene3D" id="1.10.3060.10">
    <property type="entry name" value="Helical scaffold and wing domains of SecA"/>
    <property type="match status" value="1"/>
</dbReference>
<dbReference type="Gene3D" id="3.40.50.300">
    <property type="entry name" value="P-loop containing nucleotide triphosphate hydrolases"/>
    <property type="match status" value="2"/>
</dbReference>
<dbReference type="Gene3D" id="3.90.1440.10">
    <property type="entry name" value="SecA, preprotein cross-linking domain"/>
    <property type="match status" value="1"/>
</dbReference>
<dbReference type="HAMAP" id="MF_01382">
    <property type="entry name" value="SecA"/>
    <property type="match status" value="1"/>
</dbReference>
<dbReference type="InterPro" id="IPR014001">
    <property type="entry name" value="Helicase_ATP-bd"/>
</dbReference>
<dbReference type="InterPro" id="IPR001650">
    <property type="entry name" value="Helicase_C-like"/>
</dbReference>
<dbReference type="InterPro" id="IPR027417">
    <property type="entry name" value="P-loop_NTPase"/>
</dbReference>
<dbReference type="InterPro" id="IPR004027">
    <property type="entry name" value="SEC_C_motif"/>
</dbReference>
<dbReference type="InterPro" id="IPR000185">
    <property type="entry name" value="SecA"/>
</dbReference>
<dbReference type="InterPro" id="IPR020937">
    <property type="entry name" value="SecA_CS"/>
</dbReference>
<dbReference type="InterPro" id="IPR011115">
    <property type="entry name" value="SecA_DEAD"/>
</dbReference>
<dbReference type="InterPro" id="IPR014018">
    <property type="entry name" value="SecA_motor_DEAD"/>
</dbReference>
<dbReference type="InterPro" id="IPR011130">
    <property type="entry name" value="SecA_preprotein_X-link_dom"/>
</dbReference>
<dbReference type="InterPro" id="IPR044722">
    <property type="entry name" value="SecA_SF2_C"/>
</dbReference>
<dbReference type="InterPro" id="IPR011116">
    <property type="entry name" value="SecA_Wing/Scaffold"/>
</dbReference>
<dbReference type="InterPro" id="IPR036266">
    <property type="entry name" value="SecA_Wing/Scaffold_sf"/>
</dbReference>
<dbReference type="InterPro" id="IPR036670">
    <property type="entry name" value="SecA_X-link_sf"/>
</dbReference>
<dbReference type="NCBIfam" id="NF009538">
    <property type="entry name" value="PRK12904.1"/>
    <property type="match status" value="1"/>
</dbReference>
<dbReference type="NCBIfam" id="TIGR00963">
    <property type="entry name" value="secA"/>
    <property type="match status" value="1"/>
</dbReference>
<dbReference type="PANTHER" id="PTHR30612:SF0">
    <property type="entry name" value="CHLOROPLAST PROTEIN-TRANSPORTING ATPASE"/>
    <property type="match status" value="1"/>
</dbReference>
<dbReference type="PANTHER" id="PTHR30612">
    <property type="entry name" value="SECA INNER MEMBRANE COMPONENT OF SEC PROTEIN SECRETION SYSTEM"/>
    <property type="match status" value="1"/>
</dbReference>
<dbReference type="Pfam" id="PF21090">
    <property type="entry name" value="P-loop_SecA"/>
    <property type="match status" value="1"/>
</dbReference>
<dbReference type="Pfam" id="PF02810">
    <property type="entry name" value="SEC-C"/>
    <property type="match status" value="1"/>
</dbReference>
<dbReference type="Pfam" id="PF07517">
    <property type="entry name" value="SecA_DEAD"/>
    <property type="match status" value="1"/>
</dbReference>
<dbReference type="Pfam" id="PF01043">
    <property type="entry name" value="SecA_PP_bind"/>
    <property type="match status" value="1"/>
</dbReference>
<dbReference type="Pfam" id="PF07516">
    <property type="entry name" value="SecA_SW"/>
    <property type="match status" value="1"/>
</dbReference>
<dbReference type="PRINTS" id="PR00906">
    <property type="entry name" value="SECA"/>
</dbReference>
<dbReference type="SMART" id="SM00957">
    <property type="entry name" value="SecA_DEAD"/>
    <property type="match status" value="1"/>
</dbReference>
<dbReference type="SMART" id="SM00958">
    <property type="entry name" value="SecA_PP_bind"/>
    <property type="match status" value="1"/>
</dbReference>
<dbReference type="SUPFAM" id="SSF81886">
    <property type="entry name" value="Helical scaffold and wing domains of SecA"/>
    <property type="match status" value="2"/>
</dbReference>
<dbReference type="SUPFAM" id="SSF52540">
    <property type="entry name" value="P-loop containing nucleoside triphosphate hydrolases"/>
    <property type="match status" value="2"/>
</dbReference>
<dbReference type="SUPFAM" id="SSF81767">
    <property type="entry name" value="Pre-protein crosslinking domain of SecA"/>
    <property type="match status" value="1"/>
</dbReference>
<dbReference type="PROSITE" id="PS01312">
    <property type="entry name" value="SECA"/>
    <property type="match status" value="1"/>
</dbReference>
<dbReference type="PROSITE" id="PS51196">
    <property type="entry name" value="SECA_MOTOR_DEAD"/>
    <property type="match status" value="1"/>
</dbReference>
<keyword id="KW-0067">ATP-binding</keyword>
<keyword id="KW-0997">Cell inner membrane</keyword>
<keyword id="KW-1003">Cell membrane</keyword>
<keyword id="KW-0963">Cytoplasm</keyword>
<keyword id="KW-0472">Membrane</keyword>
<keyword id="KW-0479">Metal-binding</keyword>
<keyword id="KW-0547">Nucleotide-binding</keyword>
<keyword id="KW-0653">Protein transport</keyword>
<keyword id="KW-1185">Reference proteome</keyword>
<keyword id="KW-1278">Translocase</keyword>
<keyword id="KW-0811">Translocation</keyword>
<keyword id="KW-0813">Transport</keyword>
<keyword id="KW-0862">Zinc</keyword>
<proteinExistence type="inferred from homology"/>
<name>SECA_ANADF</name>
<protein>
    <recommendedName>
        <fullName evidence="1">Protein translocase subunit SecA</fullName>
        <ecNumber evidence="1">7.4.2.8</ecNumber>
    </recommendedName>
</protein>
<comment type="function">
    <text evidence="1">Part of the Sec protein translocase complex. Interacts with the SecYEG preprotein conducting channel. Has a central role in coupling the hydrolysis of ATP to the transfer of proteins into and across the cell membrane, serving as an ATP-driven molecular motor driving the stepwise translocation of polypeptide chains across the membrane.</text>
</comment>
<comment type="catalytic activity">
    <reaction evidence="1">
        <text>ATP + H2O + cellular proteinSide 1 = ADP + phosphate + cellular proteinSide 2.</text>
        <dbReference type="EC" id="7.4.2.8"/>
    </reaction>
</comment>
<comment type="cofactor">
    <cofactor evidence="1">
        <name>Zn(2+)</name>
        <dbReference type="ChEBI" id="CHEBI:29105"/>
    </cofactor>
    <text evidence="1">May bind 1 zinc ion per subunit.</text>
</comment>
<comment type="subunit">
    <text evidence="1">Monomer and homodimer. Part of the essential Sec protein translocation apparatus which comprises SecA, SecYEG and auxiliary proteins SecDF-YajC and YidC.</text>
</comment>
<comment type="subcellular location">
    <subcellularLocation>
        <location evidence="1">Cell inner membrane</location>
        <topology evidence="1">Peripheral membrane protein</topology>
        <orientation evidence="1">Cytoplasmic side</orientation>
    </subcellularLocation>
    <subcellularLocation>
        <location evidence="1">Cytoplasm</location>
    </subcellularLocation>
    <text evidence="1">Distribution is 50-50.</text>
</comment>
<comment type="similarity">
    <text evidence="1">Belongs to the SecA family.</text>
</comment>
<feature type="chain" id="PRO_0000320723" description="Protein translocase subunit SecA">
    <location>
        <begin position="1"/>
        <end position="944"/>
    </location>
</feature>
<feature type="region of interest" description="Disordered" evidence="2">
    <location>
        <begin position="894"/>
        <end position="944"/>
    </location>
</feature>
<feature type="compositionally biased region" description="Basic and acidic residues" evidence="2">
    <location>
        <begin position="901"/>
        <end position="911"/>
    </location>
</feature>
<feature type="binding site" evidence="1">
    <location>
        <position position="87"/>
    </location>
    <ligand>
        <name>ATP</name>
        <dbReference type="ChEBI" id="CHEBI:30616"/>
    </ligand>
</feature>
<feature type="binding site" evidence="1">
    <location>
        <begin position="105"/>
        <end position="109"/>
    </location>
    <ligand>
        <name>ATP</name>
        <dbReference type="ChEBI" id="CHEBI:30616"/>
    </ligand>
</feature>
<feature type="binding site" evidence="1">
    <location>
        <position position="494"/>
    </location>
    <ligand>
        <name>ATP</name>
        <dbReference type="ChEBI" id="CHEBI:30616"/>
    </ligand>
</feature>
<feature type="binding site" evidence="1">
    <location>
        <position position="925"/>
    </location>
    <ligand>
        <name>Zn(2+)</name>
        <dbReference type="ChEBI" id="CHEBI:29105"/>
    </ligand>
</feature>
<feature type="binding site" evidence="1">
    <location>
        <position position="927"/>
    </location>
    <ligand>
        <name>Zn(2+)</name>
        <dbReference type="ChEBI" id="CHEBI:29105"/>
    </ligand>
</feature>
<feature type="binding site" evidence="1">
    <location>
        <position position="936"/>
    </location>
    <ligand>
        <name>Zn(2+)</name>
        <dbReference type="ChEBI" id="CHEBI:29105"/>
    </ligand>
</feature>
<feature type="binding site" evidence="1">
    <location>
        <position position="937"/>
    </location>
    <ligand>
        <name>Zn(2+)</name>
        <dbReference type="ChEBI" id="CHEBI:29105"/>
    </ligand>
</feature>
<reference key="1">
    <citation type="journal article" date="2015" name="Genome Announc.">
        <title>Complete genome sequence of Anaeromyxobacter sp. Fw109-5, an anaerobic, metal-reducing bacterium isolated from a contaminated subsurface environment.</title>
        <authorList>
            <person name="Hwang C."/>
            <person name="Copeland A."/>
            <person name="Lucas S."/>
            <person name="Lapidus A."/>
            <person name="Barry K."/>
            <person name="Glavina Del Rio T."/>
            <person name="Dalin E."/>
            <person name="Tice H."/>
            <person name="Pitluck S."/>
            <person name="Sims D."/>
            <person name="Brettin T."/>
            <person name="Bruce D.C."/>
            <person name="Detter J.C."/>
            <person name="Han C.S."/>
            <person name="Schmutz J."/>
            <person name="Larimer F.W."/>
            <person name="Land M.L."/>
            <person name="Hauser L.J."/>
            <person name="Kyrpides N."/>
            <person name="Lykidis A."/>
            <person name="Richardson P."/>
            <person name="Belieav A."/>
            <person name="Sanford R.A."/>
            <person name="Loeffler F.E."/>
            <person name="Fields M.W."/>
        </authorList>
    </citation>
    <scope>NUCLEOTIDE SEQUENCE [LARGE SCALE GENOMIC DNA]</scope>
    <source>
        <strain>Fw109-5</strain>
    </source>
</reference>
<evidence type="ECO:0000255" key="1">
    <source>
        <dbReference type="HAMAP-Rule" id="MF_01382"/>
    </source>
</evidence>
<evidence type="ECO:0000256" key="2">
    <source>
        <dbReference type="SAM" id="MobiDB-lite"/>
    </source>
</evidence>
<accession>A7H8E6</accession>
<sequence>MVNYVLRKMLGTKNERELKRLRPLVARVSELEPRMKALSDADFPRLTAEWKQQVRNGRPLDDLMPEAFALVREAGVRALGMRHFDVQLIGGAVLHSGRIAEMKTGEGKTLVATLPSVLNALSGRGVHVVTVNDYLARRDSEWMGRLYRFCGLTTGVIVHGLTDRERQDAYHSDITYGQNNEFGFDYLRDNMKFRLQDYVQGELNFAIVDEVDSILIDEARTPLIISGPSDESSDLYYRVNQVIPSMIRDQDFTVDEKSRTIVMSDSGVEKMEKKLGVQNLYDPNAIETLHHVEQALRAHHLYRNEVDYVVKNGEVLIVDEFTGRLMPGRRWSDGLHQAVEAKEGVKIEAENQTLATISFQNYFRMYSKLAGMTGTADTEAEEFAKTYNLDVVVVPTNKKNVRKDSEDVVYKTEREKFGALCDEIETRHKKGQPVLVGTVSVAKSEVVSSLLKRRGVPHDVLNAKHHQREAEIVAQAGRKGSVTISTNMAGRGTDIILGGNAEMMAKHEVGPEPDLPMEGEAEESFLARKQEWARRLEETRERLRGQTATEHDEVVALGGLHIVGTERHESRRIDNQLRGRAGRQGDPGSSIFYLSLEDELMRIFGSERIQGLMSRMGMKEGEQIEHPWLTKAIEGAQKKVEGHNFDIRKNLLEYDDVMNQQRRSVYRLRRMVLGFGAGVPVVEYDEEPKTRKKTRREQVFTWGDQREHVLDLIEDLVFDMVGASCPNRLSDWNLDGLSSMVKEQFGVEMKFAPPSGKAADARREIEEQVYAVVEKAYRQKEEELGIGPDGEPVLRRYEQWLYLQAIDQQWKDHLLSMDHLRQGIGLRGYGQKDPKQEYKKEGYEMFVQMTWRVKSAVIGNLLRLQLVRQETAEEIEQKRLAAQRRAMQRITETHAAAAGDGEEKPRPKQETVVRTQPKVGRNDPCPCGSGKKYKKCHGATEAAV</sequence>
<gene>
    <name evidence="1" type="primary">secA</name>
    <name type="ordered locus">Anae109_0780</name>
</gene>
<organism>
    <name type="scientific">Anaeromyxobacter sp. (strain Fw109-5)</name>
    <dbReference type="NCBI Taxonomy" id="404589"/>
    <lineage>
        <taxon>Bacteria</taxon>
        <taxon>Pseudomonadati</taxon>
        <taxon>Myxococcota</taxon>
        <taxon>Myxococcia</taxon>
        <taxon>Myxococcales</taxon>
        <taxon>Cystobacterineae</taxon>
        <taxon>Anaeromyxobacteraceae</taxon>
        <taxon>Anaeromyxobacter</taxon>
    </lineage>
</organism>